<name>FGD_AMYMU</name>
<keyword id="KW-0119">Carbohydrate metabolism</keyword>
<keyword id="KW-0560">Oxidoreductase</keyword>
<keyword id="KW-1185">Reference proteome</keyword>
<proteinExistence type="inferred from homology"/>
<comment type="function">
    <text evidence="1">Catalyzes the coenzyme F420-dependent oxidation of glucose 6-phosphate (G6P) to 6-phosphogluconolactone.</text>
</comment>
<comment type="catalytic activity">
    <reaction evidence="1">
        <text>oxidized coenzyme F420-(gamma-L-Glu)(n) + D-glucose 6-phosphate + H(+) = 6-phospho-D-glucono-1,5-lactone + reduced coenzyme F420-(gamma-L-Glu)(n)</text>
        <dbReference type="Rhea" id="RHEA:27294"/>
        <dbReference type="Rhea" id="RHEA-COMP:12939"/>
        <dbReference type="Rhea" id="RHEA-COMP:14378"/>
        <dbReference type="ChEBI" id="CHEBI:15378"/>
        <dbReference type="ChEBI" id="CHEBI:57955"/>
        <dbReference type="ChEBI" id="CHEBI:61548"/>
        <dbReference type="ChEBI" id="CHEBI:133980"/>
        <dbReference type="ChEBI" id="CHEBI:139511"/>
        <dbReference type="EC" id="1.1.98.2"/>
    </reaction>
</comment>
<comment type="subunit">
    <text evidence="1">Homodimer.</text>
</comment>
<comment type="similarity">
    <text evidence="1">Belongs to the F420-dependent glucose-6-phosphate dehydrogenase family.</text>
</comment>
<feature type="chain" id="PRO_0000413584" description="F420-dependent glucose-6-phosphate dehydrogenase">
    <location>
        <begin position="1"/>
        <end position="333"/>
    </location>
</feature>
<feature type="active site" description="Proton donor" evidence="1">
    <location>
        <position position="38"/>
    </location>
</feature>
<feature type="active site" description="Proton acceptor" evidence="1">
    <location>
        <position position="107"/>
    </location>
</feature>
<feature type="binding site" evidence="1">
    <location>
        <position position="37"/>
    </location>
    <ligand>
        <name>coenzyme F420-(gamma-Glu)n</name>
        <dbReference type="ChEBI" id="CHEBI:133980"/>
    </ligand>
</feature>
<feature type="binding site" evidence="1">
    <location>
        <position position="74"/>
    </location>
    <ligand>
        <name>coenzyme F420-(gamma-Glu)n</name>
        <dbReference type="ChEBI" id="CHEBI:133980"/>
    </ligand>
</feature>
<feature type="binding site" evidence="1">
    <location>
        <begin position="105"/>
        <end position="106"/>
    </location>
    <ligand>
        <name>coenzyme F420-(gamma-Glu)n</name>
        <dbReference type="ChEBI" id="CHEBI:133980"/>
    </ligand>
</feature>
<feature type="binding site" evidence="1">
    <location>
        <position position="110"/>
    </location>
    <ligand>
        <name>coenzyme F420-(gamma-Glu)n</name>
        <dbReference type="ChEBI" id="CHEBI:133980"/>
    </ligand>
</feature>
<feature type="binding site" evidence="1">
    <location>
        <begin position="174"/>
        <end position="175"/>
    </location>
    <ligand>
        <name>coenzyme F420-(gamma-Glu)n</name>
        <dbReference type="ChEBI" id="CHEBI:133980"/>
    </ligand>
</feature>
<feature type="binding site" evidence="1">
    <location>
        <begin position="177"/>
        <end position="178"/>
    </location>
    <ligand>
        <name>coenzyme F420-(gamma-Glu)n</name>
        <dbReference type="ChEBI" id="CHEBI:133980"/>
    </ligand>
</feature>
<feature type="binding site" evidence="1">
    <location>
        <position position="192"/>
    </location>
    <ligand>
        <name>substrate</name>
    </ligand>
</feature>
<feature type="binding site" evidence="1">
    <location>
        <position position="195"/>
    </location>
    <ligand>
        <name>substrate</name>
    </ligand>
</feature>
<feature type="binding site" evidence="1">
    <location>
        <position position="256"/>
    </location>
    <ligand>
        <name>substrate</name>
    </ligand>
</feature>
<feature type="binding site" evidence="1">
    <location>
        <position position="280"/>
    </location>
    <ligand>
        <name>substrate</name>
    </ligand>
</feature>
<accession>D8I5S8</accession>
<reference key="1">
    <citation type="journal article" date="2010" name="Cell Res.">
        <title>Complete genome sequence of the rifamycin SV-producing Amycolatopsis mediterranei U32 revealed its genetic characteristics in phylogeny and metabolism.</title>
        <authorList>
            <person name="Zhao W."/>
            <person name="Zhong Y."/>
            <person name="Yuan H."/>
            <person name="Wang J."/>
            <person name="Zheng H."/>
            <person name="Wang Y."/>
            <person name="Cen X."/>
            <person name="Xu F."/>
            <person name="Bai J."/>
            <person name="Han X."/>
            <person name="Lu G."/>
            <person name="Zhu Y."/>
            <person name="Shao Z."/>
            <person name="Yan H."/>
            <person name="Li C."/>
            <person name="Peng N."/>
            <person name="Zhang Z."/>
            <person name="Zhang Y."/>
            <person name="Lin W."/>
            <person name="Fan Y."/>
            <person name="Qin Z."/>
            <person name="Hu Y."/>
            <person name="Zhu B."/>
            <person name="Wang S."/>
            <person name="Ding X."/>
            <person name="Zhao G.P."/>
        </authorList>
    </citation>
    <scope>NUCLEOTIDE SEQUENCE [LARGE SCALE GENOMIC DNA]</scope>
    <source>
        <strain>U-32</strain>
    </source>
</reference>
<organism>
    <name type="scientific">Amycolatopsis mediterranei (strain U-32)</name>
    <dbReference type="NCBI Taxonomy" id="749927"/>
    <lineage>
        <taxon>Bacteria</taxon>
        <taxon>Bacillati</taxon>
        <taxon>Actinomycetota</taxon>
        <taxon>Actinomycetes</taxon>
        <taxon>Pseudonocardiales</taxon>
        <taxon>Pseudonocardiaceae</taxon>
        <taxon>Amycolatopsis</taxon>
    </lineage>
</organism>
<gene>
    <name evidence="1" type="primary">fgd</name>
    <name type="ordered locus">AMED_3381</name>
</gene>
<sequence>MLKVGYKASAEQFGPRDLVEYAVRAEEVGLDSVWVSDHFLPWRHEGGHAPWALAWMPAVAERTKRVQIGTSVLTPTFRYNPAVIAQAFATMSLLSNGRVILGVGSGEALNEIAVSGREWPEFKERFARLRESIKLIRELWTSDNVNFKGDYYELVDAKIYDRPEQPVPVYIAAGGPVVAKYAGRAGDGFICTSGKGMELYTDKLMPAVKEGAEAAEKTVEDVDRTIEIKLSYDRDHEKALENTRFWAPLSLSAEQKHSVSSAEEMERLADELPIDQVAKRWIVASDPDEAVAQIKPYLDAGLNHLVFHGPGHDQERFLTQFSEDVLPKLRALG</sequence>
<protein>
    <recommendedName>
        <fullName evidence="1">F420-dependent glucose-6-phosphate dehydrogenase</fullName>
        <shortName evidence="1">FGD</shortName>
        <shortName evidence="1">G6PD</shortName>
        <ecNumber evidence="1">1.1.98.2</ecNumber>
    </recommendedName>
</protein>
<evidence type="ECO:0000255" key="1">
    <source>
        <dbReference type="HAMAP-Rule" id="MF_02123"/>
    </source>
</evidence>
<dbReference type="EC" id="1.1.98.2" evidence="1"/>
<dbReference type="EMBL" id="CP002000">
    <property type="protein sequence ID" value="ADJ45167.1"/>
    <property type="molecule type" value="Genomic_DNA"/>
</dbReference>
<dbReference type="RefSeq" id="WP_013225239.1">
    <property type="nucleotide sequence ID" value="NC_014318.1"/>
</dbReference>
<dbReference type="RefSeq" id="YP_003765569.1">
    <property type="nucleotide sequence ID" value="NC_014318.1"/>
</dbReference>
<dbReference type="SMR" id="D8I5S8"/>
<dbReference type="GeneID" id="92871133"/>
<dbReference type="KEGG" id="amd:AMED_3381"/>
<dbReference type="PATRIC" id="fig|749927.5.peg.3492"/>
<dbReference type="eggNOG" id="COG2141">
    <property type="taxonomic scope" value="Bacteria"/>
</dbReference>
<dbReference type="HOGENOM" id="CLU_027853_4_0_11"/>
<dbReference type="OrthoDB" id="180193at2"/>
<dbReference type="Proteomes" id="UP000000328">
    <property type="component" value="Chromosome"/>
</dbReference>
<dbReference type="GO" id="GO:0070967">
    <property type="term" value="F:coenzyme F420 binding"/>
    <property type="evidence" value="ECO:0007669"/>
    <property type="project" value="UniProtKB-UniRule"/>
</dbReference>
<dbReference type="GO" id="GO:0052749">
    <property type="term" value="F:glucose-6-phosphate dehydrogenase (coenzyme F420) activity"/>
    <property type="evidence" value="ECO:0007669"/>
    <property type="project" value="UniProtKB-EC"/>
</dbReference>
<dbReference type="GO" id="GO:0016705">
    <property type="term" value="F:oxidoreductase activity, acting on paired donors, with incorporation or reduction of molecular oxygen"/>
    <property type="evidence" value="ECO:0007669"/>
    <property type="project" value="InterPro"/>
</dbReference>
<dbReference type="GO" id="GO:0005975">
    <property type="term" value="P:carbohydrate metabolic process"/>
    <property type="evidence" value="ECO:0007669"/>
    <property type="project" value="UniProtKB-UniRule"/>
</dbReference>
<dbReference type="CDD" id="cd01097">
    <property type="entry name" value="Tetrahydromethanopterin_reductase"/>
    <property type="match status" value="1"/>
</dbReference>
<dbReference type="Gene3D" id="3.20.20.30">
    <property type="entry name" value="Luciferase-like domain"/>
    <property type="match status" value="1"/>
</dbReference>
<dbReference type="HAMAP" id="MF_02123">
    <property type="entry name" value="F420_G6P_DH"/>
    <property type="match status" value="1"/>
</dbReference>
<dbReference type="InterPro" id="IPR019944">
    <property type="entry name" value="F420-dep_G6P_DH"/>
</dbReference>
<dbReference type="InterPro" id="IPR050564">
    <property type="entry name" value="F420-G6PD/mer"/>
</dbReference>
<dbReference type="InterPro" id="IPR019945">
    <property type="entry name" value="F420_G6P_DH-rel"/>
</dbReference>
<dbReference type="InterPro" id="IPR011251">
    <property type="entry name" value="Luciferase-like_dom"/>
</dbReference>
<dbReference type="InterPro" id="IPR036661">
    <property type="entry name" value="Luciferase-like_sf"/>
</dbReference>
<dbReference type="NCBIfam" id="TIGR03554">
    <property type="entry name" value="F420_G6P_DH"/>
    <property type="match status" value="1"/>
</dbReference>
<dbReference type="NCBIfam" id="TIGR03557">
    <property type="entry name" value="F420_G6P_family"/>
    <property type="match status" value="1"/>
</dbReference>
<dbReference type="PANTHER" id="PTHR43244">
    <property type="match status" value="1"/>
</dbReference>
<dbReference type="PANTHER" id="PTHR43244:SF1">
    <property type="entry name" value="5,10-METHYLENETETRAHYDROMETHANOPTERIN REDUCTASE"/>
    <property type="match status" value="1"/>
</dbReference>
<dbReference type="Pfam" id="PF00296">
    <property type="entry name" value="Bac_luciferase"/>
    <property type="match status" value="1"/>
</dbReference>
<dbReference type="SUPFAM" id="SSF51679">
    <property type="entry name" value="Bacterial luciferase-like"/>
    <property type="match status" value="1"/>
</dbReference>